<feature type="chain" id="PRO_0000098542" description="Isoleucine--tRNA ligase">
    <location>
        <begin position="1"/>
        <end position="1078"/>
    </location>
</feature>
<feature type="short sequence motif" description="'HIGH' region">
    <location>
        <begin position="52"/>
        <end position="62"/>
    </location>
</feature>
<feature type="short sequence motif" description="'KMSKS' region">
    <location>
        <begin position="637"/>
        <end position="641"/>
    </location>
</feature>
<feature type="binding site" evidence="1">
    <location>
        <position position="640"/>
    </location>
    <ligand>
        <name>ATP</name>
        <dbReference type="ChEBI" id="CHEBI:30616"/>
    </ligand>
</feature>
<protein>
    <recommendedName>
        <fullName evidence="1">Isoleucine--tRNA ligase</fullName>
        <ecNumber evidence="1">6.1.1.5</ecNumber>
    </recommendedName>
    <alternativeName>
        <fullName evidence="1">Isoleucyl-tRNA synthetase</fullName>
        <shortName evidence="1">IleRS</shortName>
    </alternativeName>
</protein>
<accession>Q9RUP8</accession>
<organism>
    <name type="scientific">Deinococcus radiodurans (strain ATCC 13939 / DSM 20539 / JCM 16871 / CCUG 27074 / LMG 4051 / NBRC 15346 / NCIMB 9279 / VKM B-1422 / R1)</name>
    <dbReference type="NCBI Taxonomy" id="243230"/>
    <lineage>
        <taxon>Bacteria</taxon>
        <taxon>Thermotogati</taxon>
        <taxon>Deinococcota</taxon>
        <taxon>Deinococci</taxon>
        <taxon>Deinococcales</taxon>
        <taxon>Deinococcaceae</taxon>
        <taxon>Deinococcus</taxon>
    </lineage>
</organism>
<comment type="function">
    <text evidence="1">Catalyzes the attachment of isoleucine to tRNA(Ile). As IleRS can inadvertently accommodate and process structurally similar amino acids such as valine, to avoid such errors it has two additional distinct tRNA(Ile)-dependent editing activities. One activity is designated as 'pretransfer' editing and involves the hydrolysis of activated Val-AMP. The other activity is designated 'posttransfer' editing and involves deacylation of mischarged Val-tRNA(Ile).</text>
</comment>
<comment type="catalytic activity">
    <reaction evidence="1">
        <text>tRNA(Ile) + L-isoleucine + ATP = L-isoleucyl-tRNA(Ile) + AMP + diphosphate</text>
        <dbReference type="Rhea" id="RHEA:11060"/>
        <dbReference type="Rhea" id="RHEA-COMP:9666"/>
        <dbReference type="Rhea" id="RHEA-COMP:9695"/>
        <dbReference type="ChEBI" id="CHEBI:30616"/>
        <dbReference type="ChEBI" id="CHEBI:33019"/>
        <dbReference type="ChEBI" id="CHEBI:58045"/>
        <dbReference type="ChEBI" id="CHEBI:78442"/>
        <dbReference type="ChEBI" id="CHEBI:78528"/>
        <dbReference type="ChEBI" id="CHEBI:456215"/>
        <dbReference type="EC" id="6.1.1.5"/>
    </reaction>
</comment>
<comment type="cofactor">
    <cofactor evidence="1">
        <name>Zn(2+)</name>
        <dbReference type="ChEBI" id="CHEBI:29105"/>
    </cofactor>
</comment>
<comment type="subunit">
    <text evidence="1">Monomer.</text>
</comment>
<comment type="subcellular location">
    <subcellularLocation>
        <location evidence="1">Cytoplasm</location>
    </subcellularLocation>
</comment>
<comment type="domain">
    <text evidence="1">IleRS has two distinct active sites: one for aminoacylation and one for editing. The misactivated valine is translocated from the active site to the editing site, which sterically excludes the correctly activated isoleucine. The single editing site contains two valyl binding pockets, one specific for each substrate (Val-AMP or Val-tRNA(Ile)).</text>
</comment>
<comment type="similarity">
    <text evidence="1">Belongs to the class-I aminoacyl-tRNA synthetase family. IleS type 2 subfamily.</text>
</comment>
<gene>
    <name evidence="1" type="primary">ileS</name>
    <name type="ordered locus">DR_1335</name>
</gene>
<sequence>MTKRTFAPVPTQPNFRQLEADILQKWKDEQVFEQTQTRPAPAGEFVFYEGPPTANGKPALHHVLARSFKDLFPRFKVMQGHHVTRKGGWDTHGLPVEISVEKKLGWLGRNHGASREELEEFNRLCRTSVWETIQDWNELTERMGYWLDLGDPYITYQNSYVESVWNLLRRLHEKGLVAQDYKVVPLSPRISSTLSRAELGEVDSYRMVDDPSVYVRLPIVWDTLPERAHAALSSLSGEQRQGLSLLVWTTTPWTLPSNTLAAVNPDLDYVVADSPSGRVIVAEGAVERLSALHKDAAPLEVLARFKGRDLEWVEYEPPFPEVASQLGVVSELHERRDGKPVLHFVVMADFVSDVDGSGVAHEAPAYGAEDLEVARAYGVPLMFGVDDHGILQVTHEQGKFFKDADKGLIADMKARGLMFWAGTLKHRYPFHDRTGDPILYFAKKGWYIRTSQVAGEMLAQNEKINWVPGNIKHGRFGNWLEGNVDWAISRERYWGTPLPFWQSESGQLRVIGSVAELSELAGRDLSDLDLHRPYIDDITFTLDGEEYRRVPEVLDVWFDSGSMPYAQWGLLLNEQGEAVRGAEQFAKHYPADYICEAIDQTRGWFYSLHAISTMLYDQPAYKNVICLGHIVDEKGLKMSKSKGNVVAPLPLFDQYGADSVRWYMFMASDPGDQKRFSERLVAEAQRSYVNTLWNVYSFFVLYANLDQPDLAAAPAVAERPEMDRWLLARLEETVRDVTAALESYDARSGGRALEGFVDDLSNWYVRRSRSRFWGEGGTVDTAAYATLHEALLVVSQLTAPFTPFLADALYRNLSGEESSVHLTPWPTVRAERLDRKLTADMAAVMKVVELGRAVRGAHNLKTRQPLAGVQVRAASPEALDALKRSQTQIMEELNVKAVTFLEGDTDLVQYSLRPNLPVVGKQYGKQLPVLKKALTEADARAVATAVQAGQGFSVQADGVTFDLTPGSVLVDAKAPEGVAAAEDAGYLVAFDTALTPELVREGLARDLVRAIQEARKAAGFEVQDRIALALELDGEALEAAQAWQDFIAGEVLAEQVAYGSGEGFRAEVEGGAVTLKKL</sequence>
<dbReference type="EC" id="6.1.1.5" evidence="1"/>
<dbReference type="EMBL" id="AE000513">
    <property type="protein sequence ID" value="AAF10907.1"/>
    <property type="molecule type" value="Genomic_DNA"/>
</dbReference>
<dbReference type="PIR" id="E75407">
    <property type="entry name" value="E75407"/>
</dbReference>
<dbReference type="RefSeq" id="NP_295058.1">
    <property type="nucleotide sequence ID" value="NC_001263.1"/>
</dbReference>
<dbReference type="RefSeq" id="WP_010887976.1">
    <property type="nucleotide sequence ID" value="NC_001263.1"/>
</dbReference>
<dbReference type="SMR" id="Q9RUP8"/>
<dbReference type="FunCoup" id="Q9RUP8">
    <property type="interactions" value="444"/>
</dbReference>
<dbReference type="STRING" id="243230.DR_1335"/>
<dbReference type="PaxDb" id="243230-DR_1335"/>
<dbReference type="EnsemblBacteria" id="AAF10907">
    <property type="protein sequence ID" value="AAF10907"/>
    <property type="gene ID" value="DR_1335"/>
</dbReference>
<dbReference type="GeneID" id="69517581"/>
<dbReference type="KEGG" id="dra:DR_1335"/>
<dbReference type="PATRIC" id="fig|243230.17.peg.1531"/>
<dbReference type="eggNOG" id="COG0060">
    <property type="taxonomic scope" value="Bacteria"/>
</dbReference>
<dbReference type="HOGENOM" id="CLU_001493_1_1_0"/>
<dbReference type="InParanoid" id="Q9RUP8"/>
<dbReference type="OrthoDB" id="9810365at2"/>
<dbReference type="Proteomes" id="UP000002524">
    <property type="component" value="Chromosome 1"/>
</dbReference>
<dbReference type="GO" id="GO:0005737">
    <property type="term" value="C:cytoplasm"/>
    <property type="evidence" value="ECO:0007669"/>
    <property type="project" value="UniProtKB-SubCell"/>
</dbReference>
<dbReference type="GO" id="GO:0002161">
    <property type="term" value="F:aminoacyl-tRNA deacylase activity"/>
    <property type="evidence" value="ECO:0007669"/>
    <property type="project" value="InterPro"/>
</dbReference>
<dbReference type="GO" id="GO:0005524">
    <property type="term" value="F:ATP binding"/>
    <property type="evidence" value="ECO:0007669"/>
    <property type="project" value="UniProtKB-UniRule"/>
</dbReference>
<dbReference type="GO" id="GO:0004822">
    <property type="term" value="F:isoleucine-tRNA ligase activity"/>
    <property type="evidence" value="ECO:0000318"/>
    <property type="project" value="GO_Central"/>
</dbReference>
<dbReference type="GO" id="GO:0000049">
    <property type="term" value="F:tRNA binding"/>
    <property type="evidence" value="ECO:0007669"/>
    <property type="project" value="InterPro"/>
</dbReference>
<dbReference type="GO" id="GO:0008270">
    <property type="term" value="F:zinc ion binding"/>
    <property type="evidence" value="ECO:0007669"/>
    <property type="project" value="UniProtKB-UniRule"/>
</dbReference>
<dbReference type="GO" id="GO:0006428">
    <property type="term" value="P:isoleucyl-tRNA aminoacylation"/>
    <property type="evidence" value="ECO:0000318"/>
    <property type="project" value="GO_Central"/>
</dbReference>
<dbReference type="CDD" id="cd07961">
    <property type="entry name" value="Anticodon_Ia_Ile_ABEc"/>
    <property type="match status" value="1"/>
</dbReference>
<dbReference type="FunFam" id="3.40.50.620:FF:000075">
    <property type="entry name" value="Isoleucine--tRNA ligase"/>
    <property type="match status" value="1"/>
</dbReference>
<dbReference type="Gene3D" id="3.40.50.620">
    <property type="entry name" value="HUPs"/>
    <property type="match status" value="2"/>
</dbReference>
<dbReference type="Gene3D" id="1.10.730.10">
    <property type="entry name" value="Isoleucyl-tRNA Synthetase, Domain 1"/>
    <property type="match status" value="1"/>
</dbReference>
<dbReference type="HAMAP" id="MF_02003">
    <property type="entry name" value="Ile_tRNA_synth_type2"/>
    <property type="match status" value="1"/>
</dbReference>
<dbReference type="InterPro" id="IPR002300">
    <property type="entry name" value="aa-tRNA-synth_Ia"/>
</dbReference>
<dbReference type="InterPro" id="IPR033709">
    <property type="entry name" value="Anticodon_Ile_ABEc"/>
</dbReference>
<dbReference type="InterPro" id="IPR002301">
    <property type="entry name" value="Ile-tRNA-ligase"/>
</dbReference>
<dbReference type="InterPro" id="IPR023586">
    <property type="entry name" value="Ile-tRNA-ligase_type2"/>
</dbReference>
<dbReference type="InterPro" id="IPR013155">
    <property type="entry name" value="M/V/L/I-tRNA-synth_anticd-bd"/>
</dbReference>
<dbReference type="InterPro" id="IPR014729">
    <property type="entry name" value="Rossmann-like_a/b/a_fold"/>
</dbReference>
<dbReference type="InterPro" id="IPR009080">
    <property type="entry name" value="tRNAsynth_Ia_anticodon-bd"/>
</dbReference>
<dbReference type="InterPro" id="IPR009008">
    <property type="entry name" value="Val/Leu/Ile-tRNA-synth_edit"/>
</dbReference>
<dbReference type="NCBIfam" id="TIGR00392">
    <property type="entry name" value="ileS"/>
    <property type="match status" value="1"/>
</dbReference>
<dbReference type="PANTHER" id="PTHR42780:SF1">
    <property type="entry name" value="ISOLEUCINE--TRNA LIGASE, CYTOPLASMIC"/>
    <property type="match status" value="1"/>
</dbReference>
<dbReference type="PANTHER" id="PTHR42780">
    <property type="entry name" value="SOLEUCYL-TRNA SYNTHETASE"/>
    <property type="match status" value="1"/>
</dbReference>
<dbReference type="Pfam" id="PF08264">
    <property type="entry name" value="Anticodon_1"/>
    <property type="match status" value="1"/>
</dbReference>
<dbReference type="Pfam" id="PF19302">
    <property type="entry name" value="DUF5915"/>
    <property type="match status" value="1"/>
</dbReference>
<dbReference type="Pfam" id="PF00133">
    <property type="entry name" value="tRNA-synt_1"/>
    <property type="match status" value="1"/>
</dbReference>
<dbReference type="PRINTS" id="PR00984">
    <property type="entry name" value="TRNASYNTHILE"/>
</dbReference>
<dbReference type="SUPFAM" id="SSF47323">
    <property type="entry name" value="Anticodon-binding domain of a subclass of class I aminoacyl-tRNA synthetases"/>
    <property type="match status" value="1"/>
</dbReference>
<dbReference type="SUPFAM" id="SSF52374">
    <property type="entry name" value="Nucleotidylyl transferase"/>
    <property type="match status" value="1"/>
</dbReference>
<dbReference type="SUPFAM" id="SSF50677">
    <property type="entry name" value="ValRS/IleRS/LeuRS editing domain"/>
    <property type="match status" value="1"/>
</dbReference>
<evidence type="ECO:0000255" key="1">
    <source>
        <dbReference type="HAMAP-Rule" id="MF_02003"/>
    </source>
</evidence>
<name>SYI_DEIRA</name>
<reference key="1">
    <citation type="journal article" date="1999" name="Science">
        <title>Genome sequence of the radioresistant bacterium Deinococcus radiodurans R1.</title>
        <authorList>
            <person name="White O."/>
            <person name="Eisen J.A."/>
            <person name="Heidelberg J.F."/>
            <person name="Hickey E.K."/>
            <person name="Peterson J.D."/>
            <person name="Dodson R.J."/>
            <person name="Haft D.H."/>
            <person name="Gwinn M.L."/>
            <person name="Nelson W.C."/>
            <person name="Richardson D.L."/>
            <person name="Moffat K.S."/>
            <person name="Qin H."/>
            <person name="Jiang L."/>
            <person name="Pamphile W."/>
            <person name="Crosby M."/>
            <person name="Shen M."/>
            <person name="Vamathevan J.J."/>
            <person name="Lam P."/>
            <person name="McDonald L.A."/>
            <person name="Utterback T.R."/>
            <person name="Zalewski C."/>
            <person name="Makarova K.S."/>
            <person name="Aravind L."/>
            <person name="Daly M.J."/>
            <person name="Minton K.W."/>
            <person name="Fleischmann R.D."/>
            <person name="Ketchum K.A."/>
            <person name="Nelson K.E."/>
            <person name="Salzberg S.L."/>
            <person name="Smith H.O."/>
            <person name="Venter J.C."/>
            <person name="Fraser C.M."/>
        </authorList>
    </citation>
    <scope>NUCLEOTIDE SEQUENCE [LARGE SCALE GENOMIC DNA]</scope>
    <source>
        <strain>ATCC 13939 / DSM 20539 / JCM 16871 / CCUG 27074 / LMG 4051 / NBRC 15346 / NCIMB 9279 / VKM B-1422 / R1</strain>
    </source>
</reference>
<proteinExistence type="inferred from homology"/>
<keyword id="KW-0030">Aminoacyl-tRNA synthetase</keyword>
<keyword id="KW-0067">ATP-binding</keyword>
<keyword id="KW-0963">Cytoplasm</keyword>
<keyword id="KW-0436">Ligase</keyword>
<keyword id="KW-0479">Metal-binding</keyword>
<keyword id="KW-0547">Nucleotide-binding</keyword>
<keyword id="KW-0648">Protein biosynthesis</keyword>
<keyword id="KW-1185">Reference proteome</keyword>
<keyword id="KW-0862">Zinc</keyword>